<name>SYC_WOLWR</name>
<comment type="catalytic activity">
    <reaction evidence="1">
        <text>tRNA(Cys) + L-cysteine + ATP = L-cysteinyl-tRNA(Cys) + AMP + diphosphate</text>
        <dbReference type="Rhea" id="RHEA:17773"/>
        <dbReference type="Rhea" id="RHEA-COMP:9661"/>
        <dbReference type="Rhea" id="RHEA-COMP:9679"/>
        <dbReference type="ChEBI" id="CHEBI:30616"/>
        <dbReference type="ChEBI" id="CHEBI:33019"/>
        <dbReference type="ChEBI" id="CHEBI:35235"/>
        <dbReference type="ChEBI" id="CHEBI:78442"/>
        <dbReference type="ChEBI" id="CHEBI:78517"/>
        <dbReference type="ChEBI" id="CHEBI:456215"/>
        <dbReference type="EC" id="6.1.1.16"/>
    </reaction>
</comment>
<comment type="cofactor">
    <cofactor evidence="1">
        <name>Zn(2+)</name>
        <dbReference type="ChEBI" id="CHEBI:29105"/>
    </cofactor>
    <text evidence="1">Binds 1 zinc ion per subunit.</text>
</comment>
<comment type="subunit">
    <text evidence="1">Monomer.</text>
</comment>
<comment type="subcellular location">
    <subcellularLocation>
        <location evidence="1">Cytoplasm</location>
    </subcellularLocation>
</comment>
<comment type="similarity">
    <text evidence="1">Belongs to the class-I aminoacyl-tRNA synthetase family.</text>
</comment>
<reference key="1">
    <citation type="journal article" date="2009" name="Proc. Natl. Acad. Sci. U.S.A.">
        <title>The mosaic genome structure of the Wolbachia wRi strain infecting Drosophila simulans.</title>
        <authorList>
            <person name="Klasson L."/>
            <person name="Westberg J."/>
            <person name="Sapountzis P."/>
            <person name="Naeslund K."/>
            <person name="Lutnaes Y."/>
            <person name="Darby A.C."/>
            <person name="Veneti Z."/>
            <person name="Chen L."/>
            <person name="Braig H.R."/>
            <person name="Garrett R."/>
            <person name="Bourtzis K."/>
            <person name="Andersson S.G."/>
        </authorList>
    </citation>
    <scope>NUCLEOTIDE SEQUENCE [LARGE SCALE GENOMIC DNA]</scope>
    <source>
        <strain>wRi</strain>
    </source>
</reference>
<organism>
    <name type="scientific">Wolbachia sp. subsp. Drosophila simulans (strain wRi)</name>
    <dbReference type="NCBI Taxonomy" id="66084"/>
    <lineage>
        <taxon>Bacteria</taxon>
        <taxon>Pseudomonadati</taxon>
        <taxon>Pseudomonadota</taxon>
        <taxon>Alphaproteobacteria</taxon>
        <taxon>Rickettsiales</taxon>
        <taxon>Anaplasmataceae</taxon>
        <taxon>Wolbachieae</taxon>
        <taxon>Wolbachia</taxon>
    </lineage>
</organism>
<sequence length="457" mass="52467">MVRLYNTLTKKKELFIPIDKDHVKMYVCGPTVYDTAHIGNARSVVVYDVLFQLLKFCYGKVTYVRNITDIDDKIINAASEKNSNIESITTYYIKAFHDDMESINCKKPTYEPKATENVDYIIKLIEHLLQSGHAYESDKHVYFNIESYHEYGALSGKKTDELVPGSRVEVNENKKHPGDFVLWKPANDIDYKLSSYWNSPWGEGRPGWHIECSAMSYAYLGKDFDIHGGGIDLQFPHHENEIAQSKSAFAGSMFAKYWMHNGFLTVNEEKMSKSLFNIVKVRDLLDSGIKGEVIRYALLKTHYRKPLDWTENVISDAQETLNKFYRLSRGLDTINIDESNAEISKDFIDALKNDLNIPEALAILHEMAAKINKMSNESEKLKLTESFVKSARFIGLLESSYQEWFTAGVSHQEIERLIDLRRAAKQNKDYNTADKIRDQLKQIGVTISDNEDGTTTW</sequence>
<feature type="chain" id="PRO_1000117312" description="Cysteine--tRNA ligase">
    <location>
        <begin position="1"/>
        <end position="457"/>
    </location>
</feature>
<feature type="short sequence motif" description="'HIGH' region">
    <location>
        <begin position="30"/>
        <end position="40"/>
    </location>
</feature>
<feature type="short sequence motif" description="'KMSKS' region">
    <location>
        <begin position="270"/>
        <end position="274"/>
    </location>
</feature>
<feature type="binding site" evidence="1">
    <location>
        <position position="28"/>
    </location>
    <ligand>
        <name>Zn(2+)</name>
        <dbReference type="ChEBI" id="CHEBI:29105"/>
    </ligand>
</feature>
<feature type="binding site" evidence="1">
    <location>
        <position position="212"/>
    </location>
    <ligand>
        <name>Zn(2+)</name>
        <dbReference type="ChEBI" id="CHEBI:29105"/>
    </ligand>
</feature>
<feature type="binding site" evidence="1">
    <location>
        <position position="237"/>
    </location>
    <ligand>
        <name>Zn(2+)</name>
        <dbReference type="ChEBI" id="CHEBI:29105"/>
    </ligand>
</feature>
<feature type="binding site" evidence="1">
    <location>
        <position position="241"/>
    </location>
    <ligand>
        <name>Zn(2+)</name>
        <dbReference type="ChEBI" id="CHEBI:29105"/>
    </ligand>
</feature>
<feature type="binding site" evidence="1">
    <location>
        <position position="273"/>
    </location>
    <ligand>
        <name>ATP</name>
        <dbReference type="ChEBI" id="CHEBI:30616"/>
    </ligand>
</feature>
<accession>C0R5B6</accession>
<dbReference type="EC" id="6.1.1.16" evidence="1"/>
<dbReference type="EMBL" id="CP001391">
    <property type="protein sequence ID" value="ACN94958.1"/>
    <property type="molecule type" value="Genomic_DNA"/>
</dbReference>
<dbReference type="RefSeq" id="WP_012673059.1">
    <property type="nucleotide sequence ID" value="NZ_MKIF01000057.1"/>
</dbReference>
<dbReference type="SMR" id="C0R5B6"/>
<dbReference type="STRING" id="66084.WRi_001040"/>
<dbReference type="KEGG" id="wri:WRi_001040"/>
<dbReference type="HOGENOM" id="CLU_013528_0_1_5"/>
<dbReference type="Proteomes" id="UP000001293">
    <property type="component" value="Chromosome"/>
</dbReference>
<dbReference type="GO" id="GO:0005829">
    <property type="term" value="C:cytosol"/>
    <property type="evidence" value="ECO:0007669"/>
    <property type="project" value="TreeGrafter"/>
</dbReference>
<dbReference type="GO" id="GO:0005524">
    <property type="term" value="F:ATP binding"/>
    <property type="evidence" value="ECO:0007669"/>
    <property type="project" value="UniProtKB-UniRule"/>
</dbReference>
<dbReference type="GO" id="GO:0004817">
    <property type="term" value="F:cysteine-tRNA ligase activity"/>
    <property type="evidence" value="ECO:0007669"/>
    <property type="project" value="UniProtKB-UniRule"/>
</dbReference>
<dbReference type="GO" id="GO:0008270">
    <property type="term" value="F:zinc ion binding"/>
    <property type="evidence" value="ECO:0007669"/>
    <property type="project" value="UniProtKB-UniRule"/>
</dbReference>
<dbReference type="GO" id="GO:0006423">
    <property type="term" value="P:cysteinyl-tRNA aminoacylation"/>
    <property type="evidence" value="ECO:0007669"/>
    <property type="project" value="UniProtKB-UniRule"/>
</dbReference>
<dbReference type="CDD" id="cd00672">
    <property type="entry name" value="CysRS_core"/>
    <property type="match status" value="1"/>
</dbReference>
<dbReference type="FunFam" id="3.40.50.620:FF:000068">
    <property type="entry name" value="Cysteine--tRNA ligase"/>
    <property type="match status" value="1"/>
</dbReference>
<dbReference type="Gene3D" id="1.20.120.1910">
    <property type="entry name" value="Cysteine-tRNA ligase, C-terminal anti-codon recognition domain"/>
    <property type="match status" value="1"/>
</dbReference>
<dbReference type="Gene3D" id="3.40.50.620">
    <property type="entry name" value="HUPs"/>
    <property type="match status" value="1"/>
</dbReference>
<dbReference type="HAMAP" id="MF_00041">
    <property type="entry name" value="Cys_tRNA_synth"/>
    <property type="match status" value="1"/>
</dbReference>
<dbReference type="InterPro" id="IPR015803">
    <property type="entry name" value="Cys-tRNA-ligase"/>
</dbReference>
<dbReference type="InterPro" id="IPR015273">
    <property type="entry name" value="Cys-tRNA-synt_Ia_DALR"/>
</dbReference>
<dbReference type="InterPro" id="IPR024909">
    <property type="entry name" value="Cys-tRNA/MSH_ligase"/>
</dbReference>
<dbReference type="InterPro" id="IPR056411">
    <property type="entry name" value="CysS_C"/>
</dbReference>
<dbReference type="InterPro" id="IPR014729">
    <property type="entry name" value="Rossmann-like_a/b/a_fold"/>
</dbReference>
<dbReference type="InterPro" id="IPR032678">
    <property type="entry name" value="tRNA-synt_1_cat_dom"/>
</dbReference>
<dbReference type="InterPro" id="IPR009080">
    <property type="entry name" value="tRNAsynth_Ia_anticodon-bd"/>
</dbReference>
<dbReference type="NCBIfam" id="TIGR00435">
    <property type="entry name" value="cysS"/>
    <property type="match status" value="1"/>
</dbReference>
<dbReference type="PANTHER" id="PTHR10890:SF3">
    <property type="entry name" value="CYSTEINE--TRNA LIGASE, CYTOPLASMIC"/>
    <property type="match status" value="1"/>
</dbReference>
<dbReference type="PANTHER" id="PTHR10890">
    <property type="entry name" value="CYSTEINYL-TRNA SYNTHETASE"/>
    <property type="match status" value="1"/>
</dbReference>
<dbReference type="Pfam" id="PF23493">
    <property type="entry name" value="CysS_C"/>
    <property type="match status" value="1"/>
</dbReference>
<dbReference type="Pfam" id="PF09190">
    <property type="entry name" value="DALR_2"/>
    <property type="match status" value="1"/>
</dbReference>
<dbReference type="Pfam" id="PF01406">
    <property type="entry name" value="tRNA-synt_1e"/>
    <property type="match status" value="1"/>
</dbReference>
<dbReference type="PRINTS" id="PR00983">
    <property type="entry name" value="TRNASYNTHCYS"/>
</dbReference>
<dbReference type="SMART" id="SM00840">
    <property type="entry name" value="DALR_2"/>
    <property type="match status" value="1"/>
</dbReference>
<dbReference type="SUPFAM" id="SSF47323">
    <property type="entry name" value="Anticodon-binding domain of a subclass of class I aminoacyl-tRNA synthetases"/>
    <property type="match status" value="1"/>
</dbReference>
<dbReference type="SUPFAM" id="SSF52374">
    <property type="entry name" value="Nucleotidylyl transferase"/>
    <property type="match status" value="1"/>
</dbReference>
<protein>
    <recommendedName>
        <fullName evidence="1">Cysteine--tRNA ligase</fullName>
        <ecNumber evidence="1">6.1.1.16</ecNumber>
    </recommendedName>
    <alternativeName>
        <fullName evidence="1">Cysteinyl-tRNA synthetase</fullName>
        <shortName evidence="1">CysRS</shortName>
    </alternativeName>
</protein>
<proteinExistence type="inferred from homology"/>
<evidence type="ECO:0000255" key="1">
    <source>
        <dbReference type="HAMAP-Rule" id="MF_00041"/>
    </source>
</evidence>
<gene>
    <name evidence="1" type="primary">cysS</name>
    <name type="ordered locus">WRi_001040</name>
</gene>
<keyword id="KW-0030">Aminoacyl-tRNA synthetase</keyword>
<keyword id="KW-0067">ATP-binding</keyword>
<keyword id="KW-0963">Cytoplasm</keyword>
<keyword id="KW-0436">Ligase</keyword>
<keyword id="KW-0479">Metal-binding</keyword>
<keyword id="KW-0547">Nucleotide-binding</keyword>
<keyword id="KW-0648">Protein biosynthesis</keyword>
<keyword id="KW-0862">Zinc</keyword>